<protein>
    <recommendedName>
        <fullName evidence="1">ATP-dependent Clp protease proteolytic subunit</fullName>
        <ecNumber evidence="1">3.4.21.92</ecNumber>
    </recommendedName>
    <alternativeName>
        <fullName evidence="1">Endopeptidase Clp</fullName>
    </alternativeName>
</protein>
<comment type="function">
    <text evidence="1">Cleaves peptides in various proteins in a process that requires ATP hydrolysis. Has a chymotrypsin-like activity. Plays a major role in the degradation of misfolded proteins.</text>
</comment>
<comment type="catalytic activity">
    <reaction evidence="1">
        <text>Hydrolysis of proteins to small peptides in the presence of ATP and magnesium. alpha-casein is the usual test substrate. In the absence of ATP, only oligopeptides shorter than five residues are hydrolyzed (such as succinyl-Leu-Tyr-|-NHMec, and Leu-Tyr-Leu-|-Tyr-Trp, in which cleavage of the -Tyr-|-Leu- and -Tyr-|-Trp bonds also occurs).</text>
        <dbReference type="EC" id="3.4.21.92"/>
    </reaction>
</comment>
<comment type="subunit">
    <text>Component of the chloroplastic Clp protease core complex.</text>
</comment>
<comment type="subcellular location">
    <subcellularLocation>
        <location evidence="1">Plastid</location>
        <location evidence="1">Chloroplast stroma</location>
    </subcellularLocation>
</comment>
<comment type="similarity">
    <text evidence="1">Belongs to the peptidase S14 family.</text>
</comment>
<name>CLPP_PINCO</name>
<accession>P36387</accession>
<keyword id="KW-0150">Chloroplast</keyword>
<keyword id="KW-0378">Hydrolase</keyword>
<keyword id="KW-0934">Plastid</keyword>
<keyword id="KW-0645">Protease</keyword>
<keyword id="KW-0720">Serine protease</keyword>
<reference key="1">
    <citation type="journal article" date="1994" name="Plant Mol. Biol.">
        <title>Identification and expression of the chloroplast clpP gene in the conifer Pinus contorta.</title>
        <authorList>
            <person name="Clarke A.K."/>
            <person name="Gustafsson P."/>
            <person name="Lidholm J.A."/>
        </authorList>
    </citation>
    <scope>NUCLEOTIDE SEQUENCE [GENOMIC DNA]</scope>
    <source>
        <tissue>Needle</tissue>
    </source>
</reference>
<organism>
    <name type="scientific">Pinus contorta</name>
    <name type="common">Shore pine</name>
    <name type="synonym">Lodgepole pine</name>
    <dbReference type="NCBI Taxonomy" id="3339"/>
    <lineage>
        <taxon>Eukaryota</taxon>
        <taxon>Viridiplantae</taxon>
        <taxon>Streptophyta</taxon>
        <taxon>Embryophyta</taxon>
        <taxon>Tracheophyta</taxon>
        <taxon>Spermatophyta</taxon>
        <taxon>Pinopsida</taxon>
        <taxon>Pinidae</taxon>
        <taxon>Conifers I</taxon>
        <taxon>Pinales</taxon>
        <taxon>Pinaceae</taxon>
        <taxon>Pinus</taxon>
        <taxon>Pinus subgen. Pinus</taxon>
    </lineage>
</organism>
<feature type="chain" id="PRO_0000179753" description="ATP-dependent Clp protease proteolytic subunit">
    <location>
        <begin position="1"/>
        <end position="205"/>
    </location>
</feature>
<feature type="active site" description="Nucleophile" evidence="1">
    <location>
        <position position="101"/>
    </location>
</feature>
<feature type="active site" evidence="1">
    <location>
        <position position="126"/>
    </location>
</feature>
<evidence type="ECO:0000255" key="1">
    <source>
        <dbReference type="HAMAP-Rule" id="MF_00444"/>
    </source>
</evidence>
<dbReference type="EC" id="3.4.21.92" evidence="1"/>
<dbReference type="EMBL" id="L28807">
    <property type="protein sequence ID" value="AAA68094.1"/>
    <property type="molecule type" value="Genomic_DNA"/>
</dbReference>
<dbReference type="PIR" id="S50763">
    <property type="entry name" value="S50763"/>
</dbReference>
<dbReference type="SMR" id="P36387"/>
<dbReference type="MEROPS" id="S14.002"/>
<dbReference type="BRENDA" id="3.4.21.92">
    <property type="organism ID" value="4843"/>
</dbReference>
<dbReference type="GO" id="GO:0009570">
    <property type="term" value="C:chloroplast stroma"/>
    <property type="evidence" value="ECO:0007669"/>
    <property type="project" value="UniProtKB-SubCell"/>
</dbReference>
<dbReference type="GO" id="GO:0009368">
    <property type="term" value="C:endopeptidase Clp complex"/>
    <property type="evidence" value="ECO:0007669"/>
    <property type="project" value="TreeGrafter"/>
</dbReference>
<dbReference type="GO" id="GO:0004176">
    <property type="term" value="F:ATP-dependent peptidase activity"/>
    <property type="evidence" value="ECO:0007669"/>
    <property type="project" value="InterPro"/>
</dbReference>
<dbReference type="GO" id="GO:0051117">
    <property type="term" value="F:ATPase binding"/>
    <property type="evidence" value="ECO:0007669"/>
    <property type="project" value="TreeGrafter"/>
</dbReference>
<dbReference type="GO" id="GO:0004252">
    <property type="term" value="F:serine-type endopeptidase activity"/>
    <property type="evidence" value="ECO:0007669"/>
    <property type="project" value="UniProtKB-UniRule"/>
</dbReference>
<dbReference type="GO" id="GO:0006515">
    <property type="term" value="P:protein quality control for misfolded or incompletely synthesized proteins"/>
    <property type="evidence" value="ECO:0007669"/>
    <property type="project" value="TreeGrafter"/>
</dbReference>
<dbReference type="CDD" id="cd07017">
    <property type="entry name" value="S14_ClpP_2"/>
    <property type="match status" value="1"/>
</dbReference>
<dbReference type="FunFam" id="3.90.226.10:FF:000006">
    <property type="entry name" value="ATP-dependent Clp protease proteolytic subunit"/>
    <property type="match status" value="1"/>
</dbReference>
<dbReference type="Gene3D" id="3.90.226.10">
    <property type="entry name" value="2-enoyl-CoA Hydratase, Chain A, domain 1"/>
    <property type="match status" value="1"/>
</dbReference>
<dbReference type="HAMAP" id="MF_00444">
    <property type="entry name" value="ClpP"/>
    <property type="match status" value="1"/>
</dbReference>
<dbReference type="InterPro" id="IPR001907">
    <property type="entry name" value="ClpP"/>
</dbReference>
<dbReference type="InterPro" id="IPR029045">
    <property type="entry name" value="ClpP/crotonase-like_dom_sf"/>
</dbReference>
<dbReference type="InterPro" id="IPR023562">
    <property type="entry name" value="ClpP/TepA"/>
</dbReference>
<dbReference type="InterPro" id="IPR033135">
    <property type="entry name" value="ClpP_His_AS"/>
</dbReference>
<dbReference type="InterPro" id="IPR018215">
    <property type="entry name" value="ClpP_Ser_AS"/>
</dbReference>
<dbReference type="PANTHER" id="PTHR10381">
    <property type="entry name" value="ATP-DEPENDENT CLP PROTEASE PROTEOLYTIC SUBUNIT"/>
    <property type="match status" value="1"/>
</dbReference>
<dbReference type="PANTHER" id="PTHR10381:SF15">
    <property type="entry name" value="CHLOROPLASTIC ATP-DEPENDENT CLP PROTEASE PROTEOLYTIC SUBUNIT 1"/>
    <property type="match status" value="1"/>
</dbReference>
<dbReference type="Pfam" id="PF00574">
    <property type="entry name" value="CLP_protease"/>
    <property type="match status" value="1"/>
</dbReference>
<dbReference type="PRINTS" id="PR00127">
    <property type="entry name" value="CLPPROTEASEP"/>
</dbReference>
<dbReference type="SUPFAM" id="SSF52096">
    <property type="entry name" value="ClpP/crotonase"/>
    <property type="match status" value="1"/>
</dbReference>
<dbReference type="PROSITE" id="PS00382">
    <property type="entry name" value="CLP_PROTEASE_HIS"/>
    <property type="match status" value="1"/>
</dbReference>
<dbReference type="PROSITE" id="PS00381">
    <property type="entry name" value="CLP_PROTEASE_SER"/>
    <property type="match status" value="1"/>
</dbReference>
<gene>
    <name evidence="1" type="primary">clpP</name>
</gene>
<geneLocation type="chloroplast"/>
<proteinExistence type="inferred from homology"/>
<sequence length="205" mass="22922">MPVGVPKVPFRAPGDEDATWVDLYNRLYRERLLFLAQDINNEIANQLMGLMVYLSAEDANKEIFSFINCPGGSVIPGVGLYRMMQAIVPDVNTICMGVAASMGSFILIGGEMPKRIALPHARVMIHQPASSYYDGSAADFHNESKHVTLVREYITECYIERTGQPEEVIQRDLNRDVFMSATEAQAYGIVDVVAEDPLIFNRFLK</sequence>